<feature type="chain" id="PRO_0000367278" description="E3 ubiquitin-protein ligase rnf8">
    <location>
        <begin position="1"/>
        <end position="485"/>
    </location>
</feature>
<feature type="domain" description="FHA" evidence="1">
    <location>
        <begin position="43"/>
        <end position="97"/>
    </location>
</feature>
<feature type="zinc finger region" description="RING-type" evidence="1">
    <location>
        <begin position="392"/>
        <end position="430"/>
    </location>
</feature>
<feature type="region of interest" description="Disordered" evidence="2">
    <location>
        <begin position="150"/>
        <end position="232"/>
    </location>
</feature>
<feature type="compositionally biased region" description="Basic and acidic residues" evidence="2">
    <location>
        <begin position="199"/>
        <end position="219"/>
    </location>
</feature>
<feature type="compositionally biased region" description="Low complexity" evidence="2">
    <location>
        <begin position="221"/>
        <end position="230"/>
    </location>
</feature>
<feature type="splice variant" id="VSP_036672" description="In isoform 2." evidence="4">
    <original>ERSKSESISSSGGNK</original>
    <variation>LKVRASPAVVVINDDSDSEDSSSSDGDTFLQSNSSIFPDSSGSDDSLILEDSSWTEEDDYL</variation>
    <location>
        <begin position="471"/>
        <end position="485"/>
    </location>
</feature>
<feature type="sequence conflict" description="In Ref. 1; AAH65643." evidence="5" ref="1">
    <original>D</original>
    <variation>N</variation>
    <location>
        <position position="134"/>
    </location>
</feature>
<feature type="sequence conflict" description="In Ref. 1; AAH65643." evidence="5" ref="1">
    <original>W</original>
    <variation>R</variation>
    <location>
        <position position="347"/>
    </location>
</feature>
<dbReference type="EC" id="2.3.2.27" evidence="1"/>
<dbReference type="EMBL" id="BC044545">
    <property type="protein sequence ID" value="AAH44545.1"/>
    <property type="molecule type" value="mRNA"/>
</dbReference>
<dbReference type="EMBL" id="BC065643">
    <property type="protein sequence ID" value="AAH65643.1"/>
    <property type="molecule type" value="mRNA"/>
</dbReference>
<dbReference type="RefSeq" id="NP_991116.1">
    <property type="nucleotide sequence ID" value="NM_205553.1"/>
</dbReference>
<dbReference type="RefSeq" id="NP_991329.1">
    <molecule id="Q803C1-1"/>
    <property type="nucleotide sequence ID" value="NM_205766.1"/>
</dbReference>
<dbReference type="SMR" id="Q803C1"/>
<dbReference type="FunCoup" id="Q803C1">
    <property type="interactions" value="1009"/>
</dbReference>
<dbReference type="STRING" id="7955.ENSDARP00000125628"/>
<dbReference type="PaxDb" id="7955-ENSDARP00000125628"/>
<dbReference type="GeneID" id="404050"/>
<dbReference type="KEGG" id="dre:404050"/>
<dbReference type="AGR" id="ZFIN:ZDB-GENE-040426-849"/>
<dbReference type="CTD" id="9025"/>
<dbReference type="ZFIN" id="ZDB-GENE-040426-849">
    <property type="gene designation" value="rnf8"/>
</dbReference>
<dbReference type="eggNOG" id="KOG3872">
    <property type="taxonomic scope" value="Eukaryota"/>
</dbReference>
<dbReference type="InParanoid" id="Q803C1"/>
<dbReference type="OrthoDB" id="341587at2759"/>
<dbReference type="PhylomeDB" id="Q803C1"/>
<dbReference type="UniPathway" id="UPA00143"/>
<dbReference type="PRO" id="PR:Q803C1"/>
<dbReference type="Proteomes" id="UP000000437">
    <property type="component" value="Chromosome 20"/>
</dbReference>
<dbReference type="GO" id="GO:0000781">
    <property type="term" value="C:chromosome, telomeric region"/>
    <property type="evidence" value="ECO:0000250"/>
    <property type="project" value="UniProtKB"/>
</dbReference>
<dbReference type="GO" id="GO:0005829">
    <property type="term" value="C:cytosol"/>
    <property type="evidence" value="ECO:0000318"/>
    <property type="project" value="GO_Central"/>
</dbReference>
<dbReference type="GO" id="GO:0005634">
    <property type="term" value="C:nucleus"/>
    <property type="evidence" value="ECO:0000250"/>
    <property type="project" value="UniProtKB"/>
</dbReference>
<dbReference type="GO" id="GO:0035861">
    <property type="term" value="C:site of double-strand break"/>
    <property type="evidence" value="ECO:0000250"/>
    <property type="project" value="UniProtKB"/>
</dbReference>
<dbReference type="GO" id="GO:0000151">
    <property type="term" value="C:ubiquitin ligase complex"/>
    <property type="evidence" value="ECO:0000250"/>
    <property type="project" value="UniProtKB"/>
</dbReference>
<dbReference type="GO" id="GO:0003682">
    <property type="term" value="F:chromatin binding"/>
    <property type="evidence" value="ECO:0000250"/>
    <property type="project" value="UniProtKB"/>
</dbReference>
<dbReference type="GO" id="GO:0042393">
    <property type="term" value="F:histone binding"/>
    <property type="evidence" value="ECO:0000250"/>
    <property type="project" value="UniProtKB"/>
</dbReference>
<dbReference type="GO" id="GO:0042803">
    <property type="term" value="F:protein homodimerization activity"/>
    <property type="evidence" value="ECO:0000250"/>
    <property type="project" value="UniProtKB"/>
</dbReference>
<dbReference type="GO" id="GO:0043130">
    <property type="term" value="F:ubiquitin binding"/>
    <property type="evidence" value="ECO:0007669"/>
    <property type="project" value="UniProtKB-UniRule"/>
</dbReference>
<dbReference type="GO" id="GO:0061630">
    <property type="term" value="F:ubiquitin protein ligase activity"/>
    <property type="evidence" value="ECO:0000250"/>
    <property type="project" value="UniProtKB"/>
</dbReference>
<dbReference type="GO" id="GO:0008270">
    <property type="term" value="F:zinc ion binding"/>
    <property type="evidence" value="ECO:0000250"/>
    <property type="project" value="UniProtKB"/>
</dbReference>
<dbReference type="GO" id="GO:0006974">
    <property type="term" value="P:DNA damage response"/>
    <property type="evidence" value="ECO:0000250"/>
    <property type="project" value="UniProtKB"/>
</dbReference>
<dbReference type="GO" id="GO:0140861">
    <property type="term" value="P:DNA repair-dependent chromatin remodeling"/>
    <property type="evidence" value="ECO:0000250"/>
    <property type="project" value="UniProtKB"/>
</dbReference>
<dbReference type="GO" id="GO:0006302">
    <property type="term" value="P:double-strand break repair"/>
    <property type="evidence" value="ECO:0000250"/>
    <property type="project" value="UniProtKB"/>
</dbReference>
<dbReference type="GO" id="GO:0006303">
    <property type="term" value="P:double-strand break repair via nonhomologous end joining"/>
    <property type="evidence" value="ECO:0000250"/>
    <property type="project" value="UniProtKB"/>
</dbReference>
<dbReference type="GO" id="GO:0040029">
    <property type="term" value="P:epigenetic regulation of gene expression"/>
    <property type="evidence" value="ECO:0000250"/>
    <property type="project" value="UniProtKB"/>
</dbReference>
<dbReference type="GO" id="GO:0045190">
    <property type="term" value="P:isotype switching"/>
    <property type="evidence" value="ECO:0000250"/>
    <property type="project" value="UniProtKB"/>
</dbReference>
<dbReference type="GO" id="GO:0034244">
    <property type="term" value="P:negative regulation of transcription elongation by RNA polymerase II"/>
    <property type="evidence" value="ECO:0000250"/>
    <property type="project" value="UniProtKB"/>
</dbReference>
<dbReference type="GO" id="GO:0045739">
    <property type="term" value="P:positive regulation of DNA repair"/>
    <property type="evidence" value="ECO:0000250"/>
    <property type="project" value="UniProtKB"/>
</dbReference>
<dbReference type="GO" id="GO:1905168">
    <property type="term" value="P:positive regulation of double-strand break repair via homologous recombination"/>
    <property type="evidence" value="ECO:0000250"/>
    <property type="project" value="UniProtKB"/>
</dbReference>
<dbReference type="GO" id="GO:0070936">
    <property type="term" value="P:protein K48-linked ubiquitination"/>
    <property type="evidence" value="ECO:0000250"/>
    <property type="project" value="UniProtKB"/>
</dbReference>
<dbReference type="GO" id="GO:0085020">
    <property type="term" value="P:protein K6-linked ubiquitination"/>
    <property type="evidence" value="ECO:0000250"/>
    <property type="project" value="UniProtKB"/>
</dbReference>
<dbReference type="GO" id="GO:0070534">
    <property type="term" value="P:protein K63-linked ubiquitination"/>
    <property type="evidence" value="ECO:0000250"/>
    <property type="project" value="UniProtKB"/>
</dbReference>
<dbReference type="GO" id="GO:0010212">
    <property type="term" value="P:response to ionizing radiation"/>
    <property type="evidence" value="ECO:0000250"/>
    <property type="project" value="UniProtKB"/>
</dbReference>
<dbReference type="GO" id="GO:0035092">
    <property type="term" value="P:sperm DNA condensation"/>
    <property type="evidence" value="ECO:0000250"/>
    <property type="project" value="UniProtKB"/>
</dbReference>
<dbReference type="GO" id="GO:0006511">
    <property type="term" value="P:ubiquitin-dependent protein catabolic process"/>
    <property type="evidence" value="ECO:0000250"/>
    <property type="project" value="UniProtKB"/>
</dbReference>
<dbReference type="CDD" id="cd22663">
    <property type="entry name" value="FHA_RNF8"/>
    <property type="match status" value="1"/>
</dbReference>
<dbReference type="CDD" id="cd16535">
    <property type="entry name" value="RING-HC_RNF8"/>
    <property type="match status" value="1"/>
</dbReference>
<dbReference type="FunFam" id="2.60.200.20:FF:000015">
    <property type="entry name" value="E3 ubiquitin-protein ligase RNF8"/>
    <property type="match status" value="1"/>
</dbReference>
<dbReference type="Gene3D" id="1.20.5.170">
    <property type="match status" value="1"/>
</dbReference>
<dbReference type="Gene3D" id="2.60.200.20">
    <property type="match status" value="1"/>
</dbReference>
<dbReference type="Gene3D" id="3.30.40.10">
    <property type="entry name" value="Zinc/RING finger domain, C3HC4 (zinc finger)"/>
    <property type="match status" value="1"/>
</dbReference>
<dbReference type="HAMAP" id="MF_03067">
    <property type="entry name" value="RNF8"/>
    <property type="match status" value="1"/>
</dbReference>
<dbReference type="InterPro" id="IPR000253">
    <property type="entry name" value="FHA_dom"/>
</dbReference>
<dbReference type="InterPro" id="IPR017335">
    <property type="entry name" value="RNF8"/>
</dbReference>
<dbReference type="InterPro" id="IPR008984">
    <property type="entry name" value="SMAD_FHA_dom_sf"/>
</dbReference>
<dbReference type="InterPro" id="IPR018957">
    <property type="entry name" value="Znf_C3HC4_RING-type"/>
</dbReference>
<dbReference type="InterPro" id="IPR001841">
    <property type="entry name" value="Znf_RING"/>
</dbReference>
<dbReference type="InterPro" id="IPR013083">
    <property type="entry name" value="Znf_RING/FYVE/PHD"/>
</dbReference>
<dbReference type="InterPro" id="IPR017907">
    <property type="entry name" value="Znf_RING_CS"/>
</dbReference>
<dbReference type="PANTHER" id="PTHR15067">
    <property type="entry name" value="E3 UBIQUITIN-PROTEIN LIGASE RNF8"/>
    <property type="match status" value="1"/>
</dbReference>
<dbReference type="PANTHER" id="PTHR15067:SF4">
    <property type="entry name" value="E3 UBIQUITIN-PROTEIN LIGASE RNF8"/>
    <property type="match status" value="1"/>
</dbReference>
<dbReference type="Pfam" id="PF00498">
    <property type="entry name" value="FHA"/>
    <property type="match status" value="1"/>
</dbReference>
<dbReference type="Pfam" id="PF00097">
    <property type="entry name" value="zf-C3HC4"/>
    <property type="match status" value="1"/>
</dbReference>
<dbReference type="PIRSF" id="PIRSF037950">
    <property type="entry name" value="E3_ubiquit_lig_RNF8"/>
    <property type="match status" value="1"/>
</dbReference>
<dbReference type="SMART" id="SM00240">
    <property type="entry name" value="FHA"/>
    <property type="match status" value="1"/>
</dbReference>
<dbReference type="SMART" id="SM00184">
    <property type="entry name" value="RING"/>
    <property type="match status" value="1"/>
</dbReference>
<dbReference type="SUPFAM" id="SSF57850">
    <property type="entry name" value="RING/U-box"/>
    <property type="match status" value="1"/>
</dbReference>
<dbReference type="SUPFAM" id="SSF49879">
    <property type="entry name" value="SMAD/FHA domain"/>
    <property type="match status" value="1"/>
</dbReference>
<dbReference type="PROSITE" id="PS50006">
    <property type="entry name" value="FHA_DOMAIN"/>
    <property type="match status" value="1"/>
</dbReference>
<dbReference type="PROSITE" id="PS00518">
    <property type="entry name" value="ZF_RING_1"/>
    <property type="match status" value="1"/>
</dbReference>
<dbReference type="PROSITE" id="PS50089">
    <property type="entry name" value="ZF_RING_2"/>
    <property type="match status" value="1"/>
</dbReference>
<keyword id="KW-0025">Alternative splicing</keyword>
<keyword id="KW-0156">Chromatin regulator</keyword>
<keyword id="KW-0227">DNA damage</keyword>
<keyword id="KW-0234">DNA repair</keyword>
<keyword id="KW-0479">Metal-binding</keyword>
<keyword id="KW-0539">Nucleus</keyword>
<keyword id="KW-1185">Reference proteome</keyword>
<keyword id="KW-0808">Transferase</keyword>
<keyword id="KW-0833">Ubl conjugation pathway</keyword>
<keyword id="KW-0862">Zinc</keyword>
<keyword id="KW-0863">Zinc-finger</keyword>
<protein>
    <recommendedName>
        <fullName evidence="1">E3 ubiquitin-protein ligase rnf8</fullName>
        <ecNumber evidence="1">2.3.2.27</ecNumber>
    </recommendedName>
    <alternativeName>
        <fullName evidence="1">RING finger protein 8</fullName>
    </alternativeName>
    <alternativeName>
        <fullName>RING-type E3 ubiquitin transferase rnf8</fullName>
    </alternativeName>
</protein>
<proteinExistence type="evidence at transcript level"/>
<accession>Q803C1</accession>
<accession>Q6P0F2</accession>
<reference key="1">
    <citation type="submission" date="2003-01" db="EMBL/GenBank/DDBJ databases">
        <authorList>
            <consortium name="NIH - Zebrafish Gene Collection (ZGC) project"/>
        </authorList>
    </citation>
    <scope>NUCLEOTIDE SEQUENCE [LARGE SCALE MRNA] (ISOFORMS 1 AND 2)</scope>
    <source>
        <strain>AB</strain>
        <tissue>Embryo</tissue>
    </source>
</reference>
<reference key="2">
    <citation type="journal article" date="2013" name="Nature">
        <title>The zebrafish reference genome sequence and its relationship to the human genome.</title>
        <authorList>
            <person name="Howe K."/>
            <person name="Clark M.D."/>
            <person name="Torroja C.F."/>
            <person name="Torrance J."/>
            <person name="Berthelot C."/>
            <person name="Muffato M."/>
            <person name="Collins J.E."/>
            <person name="Humphray S."/>
            <person name="McLaren K."/>
            <person name="Matthews L."/>
            <person name="McLaren S."/>
            <person name="Sealy I."/>
            <person name="Caccamo M."/>
            <person name="Churcher C."/>
            <person name="Scott C."/>
            <person name="Barrett J.C."/>
            <person name="Koch R."/>
            <person name="Rauch G.J."/>
            <person name="White S."/>
            <person name="Chow W."/>
            <person name="Kilian B."/>
            <person name="Quintais L.T."/>
            <person name="Guerra-Assuncao J.A."/>
            <person name="Zhou Y."/>
            <person name="Gu Y."/>
            <person name="Yen J."/>
            <person name="Vogel J.H."/>
            <person name="Eyre T."/>
            <person name="Redmond S."/>
            <person name="Banerjee R."/>
            <person name="Chi J."/>
            <person name="Fu B."/>
            <person name="Langley E."/>
            <person name="Maguire S.F."/>
            <person name="Laird G.K."/>
            <person name="Lloyd D."/>
            <person name="Kenyon E."/>
            <person name="Donaldson S."/>
            <person name="Sehra H."/>
            <person name="Almeida-King J."/>
            <person name="Loveland J."/>
            <person name="Trevanion S."/>
            <person name="Jones M."/>
            <person name="Quail M."/>
            <person name="Willey D."/>
            <person name="Hunt A."/>
            <person name="Burton J."/>
            <person name="Sims S."/>
            <person name="McLay K."/>
            <person name="Plumb B."/>
            <person name="Davis J."/>
            <person name="Clee C."/>
            <person name="Oliver K."/>
            <person name="Clark R."/>
            <person name="Riddle C."/>
            <person name="Elliot D."/>
            <person name="Threadgold G."/>
            <person name="Harden G."/>
            <person name="Ware D."/>
            <person name="Begum S."/>
            <person name="Mortimore B."/>
            <person name="Kerry G."/>
            <person name="Heath P."/>
            <person name="Phillimore B."/>
            <person name="Tracey A."/>
            <person name="Corby N."/>
            <person name="Dunn M."/>
            <person name="Johnson C."/>
            <person name="Wood J."/>
            <person name="Clark S."/>
            <person name="Pelan S."/>
            <person name="Griffiths G."/>
            <person name="Smith M."/>
            <person name="Glithero R."/>
            <person name="Howden P."/>
            <person name="Barker N."/>
            <person name="Lloyd C."/>
            <person name="Stevens C."/>
            <person name="Harley J."/>
            <person name="Holt K."/>
            <person name="Panagiotidis G."/>
            <person name="Lovell J."/>
            <person name="Beasley H."/>
            <person name="Henderson C."/>
            <person name="Gordon D."/>
            <person name="Auger K."/>
            <person name="Wright D."/>
            <person name="Collins J."/>
            <person name="Raisen C."/>
            <person name="Dyer L."/>
            <person name="Leung K."/>
            <person name="Robertson L."/>
            <person name="Ambridge K."/>
            <person name="Leongamornlert D."/>
            <person name="McGuire S."/>
            <person name="Gilderthorp R."/>
            <person name="Griffiths C."/>
            <person name="Manthravadi D."/>
            <person name="Nichol S."/>
            <person name="Barker G."/>
            <person name="Whitehead S."/>
            <person name="Kay M."/>
            <person name="Brown J."/>
            <person name="Murnane C."/>
            <person name="Gray E."/>
            <person name="Humphries M."/>
            <person name="Sycamore N."/>
            <person name="Barker D."/>
            <person name="Saunders D."/>
            <person name="Wallis J."/>
            <person name="Babbage A."/>
            <person name="Hammond S."/>
            <person name="Mashreghi-Mohammadi M."/>
            <person name="Barr L."/>
            <person name="Martin S."/>
            <person name="Wray P."/>
            <person name="Ellington A."/>
            <person name="Matthews N."/>
            <person name="Ellwood M."/>
            <person name="Woodmansey R."/>
            <person name="Clark G."/>
            <person name="Cooper J."/>
            <person name="Tromans A."/>
            <person name="Grafham D."/>
            <person name="Skuce C."/>
            <person name="Pandian R."/>
            <person name="Andrews R."/>
            <person name="Harrison E."/>
            <person name="Kimberley A."/>
            <person name="Garnett J."/>
            <person name="Fosker N."/>
            <person name="Hall R."/>
            <person name="Garner P."/>
            <person name="Kelly D."/>
            <person name="Bird C."/>
            <person name="Palmer S."/>
            <person name="Gehring I."/>
            <person name="Berger A."/>
            <person name="Dooley C.M."/>
            <person name="Ersan-Urun Z."/>
            <person name="Eser C."/>
            <person name="Geiger H."/>
            <person name="Geisler M."/>
            <person name="Karotki L."/>
            <person name="Kirn A."/>
            <person name="Konantz J."/>
            <person name="Konantz M."/>
            <person name="Oberlander M."/>
            <person name="Rudolph-Geiger S."/>
            <person name="Teucke M."/>
            <person name="Lanz C."/>
            <person name="Raddatz G."/>
            <person name="Osoegawa K."/>
            <person name="Zhu B."/>
            <person name="Rapp A."/>
            <person name="Widaa S."/>
            <person name="Langford C."/>
            <person name="Yang F."/>
            <person name="Schuster S.C."/>
            <person name="Carter N.P."/>
            <person name="Harrow J."/>
            <person name="Ning Z."/>
            <person name="Herrero J."/>
            <person name="Searle S.M."/>
            <person name="Enright A."/>
            <person name="Geisler R."/>
            <person name="Plasterk R.H."/>
            <person name="Lee C."/>
            <person name="Westerfield M."/>
            <person name="de Jong P.J."/>
            <person name="Zon L.I."/>
            <person name="Postlethwait J.H."/>
            <person name="Nusslein-Volhard C."/>
            <person name="Hubbard T.J."/>
            <person name="Roest Crollius H."/>
            <person name="Rogers J."/>
            <person name="Stemple D.L."/>
        </authorList>
    </citation>
    <scope>NOMENCLATURE</scope>
    <source>
        <strain>Tuebingen</strain>
    </source>
</reference>
<evidence type="ECO:0000255" key="1">
    <source>
        <dbReference type="HAMAP-Rule" id="MF_03067"/>
    </source>
</evidence>
<evidence type="ECO:0000256" key="2">
    <source>
        <dbReference type="SAM" id="MobiDB-lite"/>
    </source>
</evidence>
<evidence type="ECO:0000303" key="3">
    <source>
    </source>
</evidence>
<evidence type="ECO:0000303" key="4">
    <source ref="1"/>
</evidence>
<evidence type="ECO:0000305" key="5"/>
<name>RNF8_DANRE</name>
<organism>
    <name type="scientific">Danio rerio</name>
    <name type="common">Zebrafish</name>
    <name type="synonym">Brachydanio rerio</name>
    <dbReference type="NCBI Taxonomy" id="7955"/>
    <lineage>
        <taxon>Eukaryota</taxon>
        <taxon>Metazoa</taxon>
        <taxon>Chordata</taxon>
        <taxon>Craniata</taxon>
        <taxon>Vertebrata</taxon>
        <taxon>Euteleostomi</taxon>
        <taxon>Actinopterygii</taxon>
        <taxon>Neopterygii</taxon>
        <taxon>Teleostei</taxon>
        <taxon>Ostariophysi</taxon>
        <taxon>Cypriniformes</taxon>
        <taxon>Danionidae</taxon>
        <taxon>Danioninae</taxon>
        <taxon>Danio</taxon>
    </lineage>
</organism>
<gene>
    <name evidence="1" type="primary">rnf8</name>
    <name type="ORF">zgc:55936</name>
</gene>
<sequence>MEKTEEPPSSNNEEDSPAKEKIWCLQRVGRDSDWLRLFEDSEVSVGRGLNVTHQILSSSCPLMISRIHCVFKLNEGRQWTVTDNKSLNGVWVNGKRIPPSTPCILHQSDSVRLGVPLDGNPVEFDYILVQKNFDDVKSFLSGNLGKDSGAASLSQKLKNSKRKFDGGDESEPCPTQHSKSKLYRSSAPDKSRAQPCPSGERRETLKLSSRPLEEDRDKAGSSSSTCSDSSQHLATLHRYNRSLMVLKGRVGDTQKRAAELEQQQTQTPEREKEMQDLQTQLEALRGQLRSQQEQALRRMETLEKSFCEEERRLETEKAQQNEVGLKKQLEEALKEHRKVIEELKHAWQGFKEVLQAKDKELEVTKEEKEKAKAQKEEVVTQMTEVLESELQCSICSELFIEAVTLNCAHSFCQHCISEWRNRKDKCPMCWQNITSQTRSLVLDNCIDRMVENLSADMRERRLVLINERKGERSKSESISSSGGNK</sequence>
<comment type="function">
    <text evidence="1">E3 ubiquitin-protein ligase that plays a key role in DNA damage signaling via 2 distinct roles: by mediating the 'Lys-63'-linked ubiquitination of histones H2A and H2AX and promoting the recruitment of DNA repair proteins at double-strand breaks (DSBs) sites, and by catalyzing 'Lys-48'-linked ubiquitination to remove target proteins from DNA damage sites. Following DNA DSBs, it is recruited to the sites of damage by ATM-phosphorylated mdc1 and catalyzes the 'Lys-63'-linked ubiquitination of histones H2A and H2AX. H2A ubiquitination also mediates the ATM-dependent transcriptional silencing at regions flanking DSBs in cis, a mechanism to avoid collision between transcription and repair intermediates. Also catalyzes the formation of 'Lys-48'-linked polyubiquitin chains, leading to degradation of substrate proteins. In addition to its function in damage signaling, also plays a role in higher-order chromatin structure by mediating extensive chromatin decondensation.</text>
</comment>
<comment type="catalytic activity">
    <reaction evidence="1">
        <text>S-ubiquitinyl-[E2 ubiquitin-conjugating enzyme]-L-cysteine + [acceptor protein]-L-lysine = [E2 ubiquitin-conjugating enzyme]-L-cysteine + N(6)-ubiquitinyl-[acceptor protein]-L-lysine.</text>
        <dbReference type="EC" id="2.3.2.27"/>
    </reaction>
</comment>
<comment type="pathway">
    <text evidence="1">Protein modification; protein ubiquitination.</text>
</comment>
<comment type="subunit">
    <text evidence="1">Homodimer. Forms a E2-E3 ubiquitin ligase complex composed of the rnf8 homodimer and a E2 heterodimer of ube2n and ube2v2.</text>
</comment>
<comment type="subcellular location">
    <subcellularLocation>
        <location evidence="1">Nucleus</location>
    </subcellularLocation>
    <text evidence="1">Following DNA double-strand breaks, recruited to the sites of damage.</text>
</comment>
<comment type="alternative products">
    <event type="alternative splicing"/>
    <isoform>
        <id>Q803C1-1</id>
        <name>1</name>
        <sequence type="displayed"/>
    </isoform>
    <isoform>
        <id>Q803C1-2</id>
        <name>2</name>
        <sequence type="described" ref="VSP_036672"/>
    </isoform>
</comment>
<comment type="domain">
    <text evidence="1">The FHA domain specifically recognizes and binds ATM-phosphorylated MDC1.</text>
</comment>
<comment type="similarity">
    <text evidence="1">Belongs to the RNF8 family.</text>
</comment>
<comment type="caution">
    <text evidence="3 5">There is no annotated ortholog of the vertebrate gene BRCA1 in the current zebrafish genome (PubMed:23594743). Therefore, mentions of brca1 in relevant curated zebrafish entries have been removed. However some complexes, conserved widely across species, have BRCA1 in their name and so have been left unchanged.</text>
</comment>